<name>IFNW1_HUMAN</name>
<gene>
    <name type="primary">IFNW1</name>
</gene>
<protein>
    <recommendedName>
        <fullName>Interferon omega-1</fullName>
    </recommendedName>
    <alternativeName>
        <fullName>Interferon alpha-II-1</fullName>
    </alternativeName>
</protein>
<proteinExistence type="evidence at protein level"/>
<keyword id="KW-0002">3D-structure</keyword>
<keyword id="KW-0051">Antiviral defense</keyword>
<keyword id="KW-0202">Cytokine</keyword>
<keyword id="KW-0903">Direct protein sequencing</keyword>
<keyword id="KW-1015">Disulfide bond</keyword>
<keyword id="KW-0325">Glycoprotein</keyword>
<keyword id="KW-1267">Proteomics identification</keyword>
<keyword id="KW-1185">Reference proteome</keyword>
<keyword id="KW-0964">Secreted</keyword>
<keyword id="KW-0732">Signal</keyword>
<accession>P05000</accession>
<accession>Q13168</accession>
<accession>Q5U802</accession>
<accession>Q5VWD0</accession>
<accession>Q7M4P5</accession>
<reference key="1">
    <citation type="journal article" date="1985" name="Mol. Cell. Biol.">
        <title>Two distinct families of human and bovine interferon-alpha genes are coordinately expressed and encode functional polypeptides.</title>
        <authorList>
            <person name="Capon D.J."/>
            <person name="Shepard H.M."/>
            <person name="Goeddel D.V."/>
        </authorList>
    </citation>
    <scope>NUCLEOTIDE SEQUENCE [GENOMIC DNA]</scope>
</reference>
<reference key="2">
    <citation type="journal article" date="1991" name="Biochim. Biophys. Acta">
        <title>Human interferon omega 1: isolation of the gene, expression in Chinese hamster ovary cells and characterization of the recombinant protein.</title>
        <authorList>
            <person name="Adolf G.R."/>
            <person name="Fruehbeis B."/>
            <person name="Hauptmann R."/>
            <person name="Kalsner I."/>
            <person name="Maurer-Fogy I."/>
            <person name="Ostermann E."/>
            <person name="Patzelt E."/>
            <person name="Schwendenwein R."/>
            <person name="Sommergruber W."/>
            <person name="Zoephel A."/>
        </authorList>
    </citation>
    <scope>NUCLEOTIDE SEQUENCE [GENOMIC DNA]</scope>
    <source>
        <tissue>Leukocyte</tissue>
    </source>
</reference>
<reference key="3">
    <citation type="journal article" date="2004" name="Nature">
        <title>DNA sequence and analysis of human chromosome 9.</title>
        <authorList>
            <person name="Humphray S.J."/>
            <person name="Oliver K."/>
            <person name="Hunt A.R."/>
            <person name="Plumb R.W."/>
            <person name="Loveland J.E."/>
            <person name="Howe K.L."/>
            <person name="Andrews T.D."/>
            <person name="Searle S."/>
            <person name="Hunt S.E."/>
            <person name="Scott C.E."/>
            <person name="Jones M.C."/>
            <person name="Ainscough R."/>
            <person name="Almeida J.P."/>
            <person name="Ambrose K.D."/>
            <person name="Ashwell R.I.S."/>
            <person name="Babbage A.K."/>
            <person name="Babbage S."/>
            <person name="Bagguley C.L."/>
            <person name="Bailey J."/>
            <person name="Banerjee R."/>
            <person name="Barker D.J."/>
            <person name="Barlow K.F."/>
            <person name="Bates K."/>
            <person name="Beasley H."/>
            <person name="Beasley O."/>
            <person name="Bird C.P."/>
            <person name="Bray-Allen S."/>
            <person name="Brown A.J."/>
            <person name="Brown J.Y."/>
            <person name="Burford D."/>
            <person name="Burrill W."/>
            <person name="Burton J."/>
            <person name="Carder C."/>
            <person name="Carter N.P."/>
            <person name="Chapman J.C."/>
            <person name="Chen Y."/>
            <person name="Clarke G."/>
            <person name="Clark S.Y."/>
            <person name="Clee C.M."/>
            <person name="Clegg S."/>
            <person name="Collier R.E."/>
            <person name="Corby N."/>
            <person name="Crosier M."/>
            <person name="Cummings A.T."/>
            <person name="Davies J."/>
            <person name="Dhami P."/>
            <person name="Dunn M."/>
            <person name="Dutta I."/>
            <person name="Dyer L.W."/>
            <person name="Earthrowl M.E."/>
            <person name="Faulkner L."/>
            <person name="Fleming C.J."/>
            <person name="Frankish A."/>
            <person name="Frankland J.A."/>
            <person name="French L."/>
            <person name="Fricker D.G."/>
            <person name="Garner P."/>
            <person name="Garnett J."/>
            <person name="Ghori J."/>
            <person name="Gilbert J.G.R."/>
            <person name="Glison C."/>
            <person name="Grafham D.V."/>
            <person name="Gribble S."/>
            <person name="Griffiths C."/>
            <person name="Griffiths-Jones S."/>
            <person name="Grocock R."/>
            <person name="Guy J."/>
            <person name="Hall R.E."/>
            <person name="Hammond S."/>
            <person name="Harley J.L."/>
            <person name="Harrison E.S.I."/>
            <person name="Hart E.A."/>
            <person name="Heath P.D."/>
            <person name="Henderson C.D."/>
            <person name="Hopkins B.L."/>
            <person name="Howard P.J."/>
            <person name="Howden P.J."/>
            <person name="Huckle E."/>
            <person name="Johnson C."/>
            <person name="Johnson D."/>
            <person name="Joy A.A."/>
            <person name="Kay M."/>
            <person name="Keenan S."/>
            <person name="Kershaw J.K."/>
            <person name="Kimberley A.M."/>
            <person name="King A."/>
            <person name="Knights A."/>
            <person name="Laird G.K."/>
            <person name="Langford C."/>
            <person name="Lawlor S."/>
            <person name="Leongamornlert D.A."/>
            <person name="Leversha M."/>
            <person name="Lloyd C."/>
            <person name="Lloyd D.M."/>
            <person name="Lovell J."/>
            <person name="Martin S."/>
            <person name="Mashreghi-Mohammadi M."/>
            <person name="Matthews L."/>
            <person name="McLaren S."/>
            <person name="McLay K.E."/>
            <person name="McMurray A."/>
            <person name="Milne S."/>
            <person name="Nickerson T."/>
            <person name="Nisbett J."/>
            <person name="Nordsiek G."/>
            <person name="Pearce A.V."/>
            <person name="Peck A.I."/>
            <person name="Porter K.M."/>
            <person name="Pandian R."/>
            <person name="Pelan S."/>
            <person name="Phillimore B."/>
            <person name="Povey S."/>
            <person name="Ramsey Y."/>
            <person name="Rand V."/>
            <person name="Scharfe M."/>
            <person name="Sehra H.K."/>
            <person name="Shownkeen R."/>
            <person name="Sims S.K."/>
            <person name="Skuce C.D."/>
            <person name="Smith M."/>
            <person name="Steward C.A."/>
            <person name="Swarbreck D."/>
            <person name="Sycamore N."/>
            <person name="Tester J."/>
            <person name="Thorpe A."/>
            <person name="Tracey A."/>
            <person name="Tromans A."/>
            <person name="Thomas D.W."/>
            <person name="Wall M."/>
            <person name="Wallis J.M."/>
            <person name="West A.P."/>
            <person name="Whitehead S.L."/>
            <person name="Willey D.L."/>
            <person name="Williams S.A."/>
            <person name="Wilming L."/>
            <person name="Wray P.W."/>
            <person name="Young L."/>
            <person name="Ashurst J.L."/>
            <person name="Coulson A."/>
            <person name="Blocker H."/>
            <person name="Durbin R.M."/>
            <person name="Sulston J.E."/>
            <person name="Hubbard T."/>
            <person name="Jackson M.J."/>
            <person name="Bentley D.R."/>
            <person name="Beck S."/>
            <person name="Rogers J."/>
            <person name="Dunham I."/>
        </authorList>
    </citation>
    <scope>NUCLEOTIDE SEQUENCE [LARGE SCALE GENOMIC DNA]</scope>
</reference>
<reference key="4">
    <citation type="submission" date="2005-07" db="EMBL/GenBank/DDBJ databases">
        <authorList>
            <person name="Mural R.J."/>
            <person name="Istrail S."/>
            <person name="Sutton G.G."/>
            <person name="Florea L."/>
            <person name="Halpern A.L."/>
            <person name="Mobarry C.M."/>
            <person name="Lippert R."/>
            <person name="Walenz B."/>
            <person name="Shatkay H."/>
            <person name="Dew I."/>
            <person name="Miller J.R."/>
            <person name="Flanigan M.J."/>
            <person name="Edwards N.J."/>
            <person name="Bolanos R."/>
            <person name="Fasulo D."/>
            <person name="Halldorsson B.V."/>
            <person name="Hannenhalli S."/>
            <person name="Turner R."/>
            <person name="Yooseph S."/>
            <person name="Lu F."/>
            <person name="Nusskern D.R."/>
            <person name="Shue B.C."/>
            <person name="Zheng X.H."/>
            <person name="Zhong F."/>
            <person name="Delcher A.L."/>
            <person name="Huson D.H."/>
            <person name="Kravitz S.A."/>
            <person name="Mouchard L."/>
            <person name="Reinert K."/>
            <person name="Remington K.A."/>
            <person name="Clark A.G."/>
            <person name="Waterman M.S."/>
            <person name="Eichler E.E."/>
            <person name="Adams M.D."/>
            <person name="Hunkapiller M.W."/>
            <person name="Myers E.W."/>
            <person name="Venter J.C."/>
        </authorList>
    </citation>
    <scope>NUCLEOTIDE SEQUENCE [LARGE SCALE GENOMIC DNA]</scope>
</reference>
<reference key="5">
    <citation type="journal article" date="2004" name="Genome Res.">
        <title>The status, quality, and expansion of the NIH full-length cDNA project: the Mammalian Gene Collection (MGC).</title>
        <authorList>
            <consortium name="The MGC Project Team"/>
        </authorList>
    </citation>
    <scope>NUCLEOTIDE SEQUENCE [LARGE SCALE MRNA]</scope>
</reference>
<reference key="6">
    <citation type="journal article" date="1985" name="Nucleic Acids Res.">
        <title>A novel class of human type I interferons.</title>
        <authorList>
            <person name="Hauptmann R."/>
            <person name="Swetly P."/>
        </authorList>
    </citation>
    <scope>NUCLEOTIDE SEQUENCE [MRNA] OF 22-195</scope>
</reference>
<reference key="7">
    <citation type="journal article" date="1993" name="Sci. China, Ser. B, Chem. Life Sci. Earth Sci.">
        <title>Cloning, sequencing and expression in E. coli of interferon-omega 1 gene.</title>
        <authorList>
            <person name="Li M.F."/>
            <person name="Zeng Q."/>
            <person name="Zhou Y."/>
            <person name="Guo H.Y."/>
            <person name="Hou Y.D."/>
        </authorList>
    </citation>
    <scope>NUCLEOTIDE SEQUENCE [GENOMIC DNA] OF 22-195</scope>
</reference>
<reference key="8">
    <citation type="journal article" date="1994" name="Biosci. Biotechnol. Biochem.">
        <title>Identification of glycosylated subtypes of interferon-alpha produced by human leukocytes.</title>
        <authorList>
            <person name="Shirono H."/>
            <person name="Koga J."/>
            <person name="Uemura H."/>
            <person name="Matsuo A."/>
        </authorList>
    </citation>
    <scope>PROTEIN SEQUENCE OF 22-55</scope>
</reference>
<reference key="9">
    <citation type="journal article" date="2004" name="Protein Sci.">
        <title>Signal peptide prediction based on analysis of experimentally verified cleavage sites.</title>
        <authorList>
            <person name="Zhang Z."/>
            <person name="Henzel W.J."/>
        </authorList>
    </citation>
    <scope>PROTEIN SEQUENCE OF 22-36</scope>
</reference>
<reference key="10">
    <citation type="journal article" date="1990" name="J. Biol. Chem.">
        <title>Purification and characterization of natural human interferon omega 1. Two alternative cleavage sites for the signal peptidase.</title>
        <authorList>
            <person name="Adolf G.R."/>
            <person name="Maurer-Fogy I."/>
            <person name="Kalsner I."/>
            <person name="Cantell K."/>
        </authorList>
    </citation>
    <scope>PROTEIN SEQUENCE OF 22-33</scope>
    <scope>GLYCOSYLATION AT ASN-101</scope>
</reference>
<reference key="11">
    <citation type="submission" date="2004-10" db="EMBL/GenBank/DDBJ databases">
        <title>Human IFN-omega 1 gene isolated from embryonic hepar.</title>
        <authorList>
            <person name="Yang R.Y."/>
            <person name="Yang Z.F."/>
            <person name="Zhu Y.T."/>
            <person name="Feng L.L."/>
            <person name="Liu N."/>
            <person name="Zhao F."/>
            <person name="Zhang F.X."/>
            <person name="Fu L.C."/>
        </authorList>
    </citation>
    <scope>NUCLEOTIDE SEQUENCE [MRNA] OF 24-195</scope>
    <source>
        <tissue>Liver</tissue>
    </source>
</reference>
<reference key="12">
    <citation type="journal article" date="2011" name="Cell">
        <title>Structural linkage between ligand discrimination and receptor activation by type I interferons.</title>
        <authorList>
            <person name="Thomas C."/>
            <person name="Moraga I."/>
            <person name="Levin D."/>
            <person name="Krutzik P.O."/>
            <person name="Podoplelova Y."/>
            <person name="Trejo A."/>
            <person name="Lee C."/>
            <person name="Yarden G."/>
            <person name="Vleck S.E."/>
            <person name="Glenn J.S."/>
            <person name="Nolan G.P."/>
            <person name="Piehler J."/>
            <person name="Schreiber G."/>
            <person name="Garcia K.C."/>
        </authorList>
    </citation>
    <scope>X-RAY CRYSTALLOGRAPHY (3.5 ANGSTROMS) OF 22-195 IN COMPLEX WITH IFNAR1 AND IFNAR2</scope>
    <scope>DISULFIDE BOND</scope>
</reference>
<sequence length="195" mass="22319">MALLFPLLAALVMTSYSPVGSLGCDLPQNHGLLSRNTLVLLHQMRRISPFLCLKDRRDFRFPQEMVKGSQLQKAHVMSVLHEMLQQIFSLFHTERSSAAWNMTLLDQLHTGLHQQLQHLETCLLQVVGEGESAGAISSPALTLRRYFQGIRVYLKEKKYSDCAWEVVRMEIMKSLFLSTNMQERLRSKDRDLGSS</sequence>
<organism>
    <name type="scientific">Homo sapiens</name>
    <name type="common">Human</name>
    <dbReference type="NCBI Taxonomy" id="9606"/>
    <lineage>
        <taxon>Eukaryota</taxon>
        <taxon>Metazoa</taxon>
        <taxon>Chordata</taxon>
        <taxon>Craniata</taxon>
        <taxon>Vertebrata</taxon>
        <taxon>Euteleostomi</taxon>
        <taxon>Mammalia</taxon>
        <taxon>Eutheria</taxon>
        <taxon>Euarchontoglires</taxon>
        <taxon>Primates</taxon>
        <taxon>Haplorrhini</taxon>
        <taxon>Catarrhini</taxon>
        <taxon>Hominidae</taxon>
        <taxon>Homo</taxon>
    </lineage>
</organism>
<feature type="signal peptide" description="Or 23 in some molecules" evidence="2 3 5">
    <location>
        <begin position="1"/>
        <end position="21"/>
    </location>
</feature>
<feature type="chain" id="PRO_0000016408" description="Interferon omega-1">
    <location>
        <begin position="22"/>
        <end position="195"/>
    </location>
</feature>
<feature type="glycosylation site" id="CAR_000050" description="N-linked (GlcNAc...) asparagine" evidence="3">
    <location>
        <position position="101"/>
    </location>
</feature>
<feature type="disulfide bond" evidence="1">
    <location>
        <begin position="24"/>
        <end position="122"/>
    </location>
</feature>
<feature type="disulfide bond" evidence="4">
    <location>
        <begin position="52"/>
        <end position="162"/>
    </location>
</feature>
<feature type="sequence variant" id="VAR_020028" description="In dbSNP:rs2230055.">
    <original>R</original>
    <variation>S</variation>
    <location>
        <position position="95"/>
    </location>
</feature>
<feature type="sequence conflict" description="In Ref. 7; AAA70091." evidence="6" ref="7">
    <original>LG</original>
    <variation>EF</variation>
    <location>
        <begin position="22"/>
        <end position="23"/>
    </location>
</feature>
<feature type="sequence conflict" description="In Ref. 8; AA sequence." evidence="6" ref="8">
    <original>H</original>
    <variation>M</variation>
    <location>
        <position position="42"/>
    </location>
</feature>
<feature type="sequence conflict" description="In Ref. 7; AAA70091." evidence="6" ref="7">
    <original>V</original>
    <variation>A</variation>
    <location>
        <position position="79"/>
    </location>
</feature>
<feature type="sequence conflict" description="In Ref. 1; AAA52724." evidence="6" ref="1">
    <original>G</original>
    <variation>E</variation>
    <location>
        <position position="111"/>
    </location>
</feature>
<feature type="sequence conflict" description="In Ref. 7; AAA70091." evidence="6" ref="7">
    <original>V</original>
    <variation>D</variation>
    <location>
        <position position="167"/>
    </location>
</feature>
<evidence type="ECO:0000250" key="1"/>
<evidence type="ECO:0000269" key="2">
    <source>
    </source>
</evidence>
<evidence type="ECO:0000269" key="3">
    <source>
    </source>
</evidence>
<evidence type="ECO:0000269" key="4">
    <source>
    </source>
</evidence>
<evidence type="ECO:0000269" key="5">
    <source>
    </source>
</evidence>
<evidence type="ECO:0000305" key="6"/>
<comment type="interaction">
    <interactant intactId="EBI-4394437">
        <id>P05000</id>
    </interactant>
    <interactant intactId="EBI-746466">
        <id>P05161</id>
        <label>ISG15</label>
    </interactant>
    <organismsDiffer>false</organismsDiffer>
    <experiments>2</experiments>
</comment>
<comment type="subcellular location">
    <subcellularLocation>
        <location>Secreted</location>
    </subcellularLocation>
</comment>
<comment type="similarity">
    <text evidence="6">Belongs to the alpha/beta interferon family.</text>
</comment>
<dbReference type="EMBL" id="M11003">
    <property type="protein sequence ID" value="AAA52724.1"/>
    <property type="molecule type" value="Genomic_DNA"/>
</dbReference>
<dbReference type="EMBL" id="X58822">
    <property type="protein sequence ID" value="CAA41626.1"/>
    <property type="molecule type" value="Genomic_DNA"/>
</dbReference>
<dbReference type="EMBL" id="AL390882">
    <property type="status" value="NOT_ANNOTATED_CDS"/>
    <property type="molecule type" value="Genomic_DNA"/>
</dbReference>
<dbReference type="EMBL" id="CH471071">
    <property type="protein sequence ID" value="EAW58624.1"/>
    <property type="molecule type" value="Genomic_DNA"/>
</dbReference>
<dbReference type="EMBL" id="BC069095">
    <property type="protein sequence ID" value="AAH69095.1"/>
    <property type="molecule type" value="mRNA"/>
</dbReference>
<dbReference type="EMBL" id="BC117290">
    <property type="protein sequence ID" value="AAI17291.1"/>
    <property type="molecule type" value="mRNA"/>
</dbReference>
<dbReference type="EMBL" id="BC117292">
    <property type="protein sequence ID" value="AAI17293.1"/>
    <property type="molecule type" value="mRNA"/>
</dbReference>
<dbReference type="EMBL" id="X02669">
    <property type="protein sequence ID" value="CAA26501.1"/>
    <property type="molecule type" value="mRNA"/>
</dbReference>
<dbReference type="EMBL" id="U25670">
    <property type="protein sequence ID" value="AAA70091.1"/>
    <property type="molecule type" value="Genomic_DNA"/>
</dbReference>
<dbReference type="EMBL" id="AY780805">
    <property type="protein sequence ID" value="AAV49320.1"/>
    <property type="molecule type" value="mRNA"/>
</dbReference>
<dbReference type="CCDS" id="CCDS6496.1"/>
<dbReference type="PIR" id="A93070">
    <property type="entry name" value="IVHUII"/>
</dbReference>
<dbReference type="PIR" id="PC2204">
    <property type="entry name" value="PC2204"/>
</dbReference>
<dbReference type="PIR" id="PC2205">
    <property type="entry name" value="PC2205"/>
</dbReference>
<dbReference type="RefSeq" id="NP_002168.1">
    <property type="nucleotide sequence ID" value="NM_002177.3"/>
</dbReference>
<dbReference type="PDB" id="3SE4">
    <property type="method" value="X-ray"/>
    <property type="resolution" value="3.50 A"/>
    <property type="chains" value="B=22-195"/>
</dbReference>
<dbReference type="PDBsum" id="3SE4"/>
<dbReference type="SMR" id="P05000"/>
<dbReference type="BioGRID" id="109689">
    <property type="interactions" value="7"/>
</dbReference>
<dbReference type="ComplexPortal" id="CPX-6010">
    <property type="entry name" value="Interferon omega receptor-ligand complex"/>
</dbReference>
<dbReference type="CORUM" id="P05000"/>
<dbReference type="FunCoup" id="P05000">
    <property type="interactions" value="422"/>
</dbReference>
<dbReference type="IntAct" id="P05000">
    <property type="interactions" value="6"/>
</dbReference>
<dbReference type="STRING" id="9606.ENSP00000369578"/>
<dbReference type="GlyConnect" id="295">
    <property type="glycosylation" value="2 N-Linked glycans (1 site)"/>
</dbReference>
<dbReference type="GlyCosmos" id="P05000">
    <property type="glycosylation" value="1 site, 4 glycans"/>
</dbReference>
<dbReference type="GlyGen" id="P05000">
    <property type="glycosylation" value="1 site, 2 N-linked glycans (1 site)"/>
</dbReference>
<dbReference type="iPTMnet" id="P05000"/>
<dbReference type="BioMuta" id="IFNW1"/>
<dbReference type="DMDM" id="400061"/>
<dbReference type="MassIVE" id="P05000"/>
<dbReference type="PaxDb" id="9606-ENSP00000369578"/>
<dbReference type="PeptideAtlas" id="P05000"/>
<dbReference type="ProteomicsDB" id="51761"/>
<dbReference type="Antibodypedia" id="24850">
    <property type="antibodies" value="130 antibodies from 21 providers"/>
</dbReference>
<dbReference type="DNASU" id="3467"/>
<dbReference type="Ensembl" id="ENST00000380229.4">
    <property type="protein sequence ID" value="ENSP00000369578.2"/>
    <property type="gene ID" value="ENSG00000177047.7"/>
</dbReference>
<dbReference type="GeneID" id="3467"/>
<dbReference type="KEGG" id="hsa:3467"/>
<dbReference type="MANE-Select" id="ENST00000380229.4">
    <property type="protein sequence ID" value="ENSP00000369578.2"/>
    <property type="RefSeq nucleotide sequence ID" value="NM_002177.3"/>
    <property type="RefSeq protein sequence ID" value="NP_002168.1"/>
</dbReference>
<dbReference type="UCSC" id="uc003zol.2">
    <property type="organism name" value="human"/>
</dbReference>
<dbReference type="AGR" id="HGNC:5448"/>
<dbReference type="CTD" id="3467"/>
<dbReference type="DisGeNET" id="3467"/>
<dbReference type="GeneCards" id="IFNW1"/>
<dbReference type="HGNC" id="HGNC:5448">
    <property type="gene designation" value="IFNW1"/>
</dbReference>
<dbReference type="HPA" id="ENSG00000177047">
    <property type="expression patterns" value="Not detected"/>
</dbReference>
<dbReference type="MIM" id="147553">
    <property type="type" value="gene"/>
</dbReference>
<dbReference type="neXtProt" id="NX_P05000"/>
<dbReference type="OpenTargets" id="ENSG00000177047"/>
<dbReference type="PharmGKB" id="PA29683"/>
<dbReference type="VEuPathDB" id="HostDB:ENSG00000177047"/>
<dbReference type="eggNOG" id="ENOG502T289">
    <property type="taxonomic scope" value="Eukaryota"/>
</dbReference>
<dbReference type="GeneTree" id="ENSGT01000000214430"/>
<dbReference type="HOGENOM" id="CLU_109427_0_0_1"/>
<dbReference type="InParanoid" id="P05000"/>
<dbReference type="OMA" id="VVRMEIM"/>
<dbReference type="OrthoDB" id="9529410at2759"/>
<dbReference type="PAN-GO" id="P05000">
    <property type="GO annotations" value="12 GO annotations based on evolutionary models"/>
</dbReference>
<dbReference type="PhylomeDB" id="P05000"/>
<dbReference type="TreeFam" id="TF336177"/>
<dbReference type="PathwayCommons" id="P05000"/>
<dbReference type="SignaLink" id="P05000"/>
<dbReference type="SIGNOR" id="P05000"/>
<dbReference type="BioGRID-ORCS" id="3467">
    <property type="hits" value="23 hits in 1137 CRISPR screens"/>
</dbReference>
<dbReference type="EvolutionaryTrace" id="P05000"/>
<dbReference type="GeneWiki" id="IFNW1"/>
<dbReference type="GenomeRNAi" id="3467"/>
<dbReference type="Pharos" id="P05000">
    <property type="development level" value="Tbio"/>
</dbReference>
<dbReference type="PRO" id="PR:P05000"/>
<dbReference type="Proteomes" id="UP000005640">
    <property type="component" value="Chromosome 9"/>
</dbReference>
<dbReference type="RNAct" id="P05000">
    <property type="molecule type" value="protein"/>
</dbReference>
<dbReference type="Bgee" id="ENSG00000177047">
    <property type="expression patterns" value="Expressed in male germ line stem cell (sensu Vertebrata) in testis and 2 other cell types or tissues"/>
</dbReference>
<dbReference type="GO" id="GO:0005615">
    <property type="term" value="C:extracellular space"/>
    <property type="evidence" value="ECO:0000318"/>
    <property type="project" value="GO_Central"/>
</dbReference>
<dbReference type="GO" id="GO:0043235">
    <property type="term" value="C:receptor complex"/>
    <property type="evidence" value="ECO:0000353"/>
    <property type="project" value="ComplexPortal"/>
</dbReference>
<dbReference type="GO" id="GO:0005125">
    <property type="term" value="F:cytokine activity"/>
    <property type="evidence" value="ECO:0000318"/>
    <property type="project" value="GO_Central"/>
</dbReference>
<dbReference type="GO" id="GO:0005126">
    <property type="term" value="F:cytokine receptor binding"/>
    <property type="evidence" value="ECO:0000304"/>
    <property type="project" value="ProtInc"/>
</dbReference>
<dbReference type="GO" id="GO:0005132">
    <property type="term" value="F:type I interferon receptor binding"/>
    <property type="evidence" value="ECO:0000318"/>
    <property type="project" value="GO_Central"/>
</dbReference>
<dbReference type="GO" id="GO:0002250">
    <property type="term" value="P:adaptive immune response"/>
    <property type="evidence" value="ECO:0000318"/>
    <property type="project" value="GO_Central"/>
</dbReference>
<dbReference type="GO" id="GO:0002312">
    <property type="term" value="P:B cell activation involved in immune response"/>
    <property type="evidence" value="ECO:0000318"/>
    <property type="project" value="GO_Central"/>
</dbReference>
<dbReference type="GO" id="GO:0098586">
    <property type="term" value="P:cellular response to virus"/>
    <property type="evidence" value="ECO:0000303"/>
    <property type="project" value="ComplexPortal"/>
</dbReference>
<dbReference type="GO" id="GO:0051607">
    <property type="term" value="P:defense response to virus"/>
    <property type="evidence" value="ECO:0007669"/>
    <property type="project" value="UniProtKB-KW"/>
</dbReference>
<dbReference type="GO" id="GO:0006959">
    <property type="term" value="P:humoral immune response"/>
    <property type="evidence" value="ECO:0000318"/>
    <property type="project" value="GO_Central"/>
</dbReference>
<dbReference type="GO" id="GO:0002323">
    <property type="term" value="P:natural killer cell activation involved in immune response"/>
    <property type="evidence" value="ECO:0000318"/>
    <property type="project" value="GO_Central"/>
</dbReference>
<dbReference type="GO" id="GO:0051726">
    <property type="term" value="P:regulation of cell cycle"/>
    <property type="evidence" value="ECO:0000304"/>
    <property type="project" value="ProtInc"/>
</dbReference>
<dbReference type="GO" id="GO:0043330">
    <property type="term" value="P:response to exogenous dsRNA"/>
    <property type="evidence" value="ECO:0000318"/>
    <property type="project" value="GO_Central"/>
</dbReference>
<dbReference type="GO" id="GO:0009615">
    <property type="term" value="P:response to virus"/>
    <property type="evidence" value="ECO:0000304"/>
    <property type="project" value="ProtInc"/>
</dbReference>
<dbReference type="GO" id="GO:0002286">
    <property type="term" value="P:T cell activation involved in immune response"/>
    <property type="evidence" value="ECO:0000318"/>
    <property type="project" value="GO_Central"/>
</dbReference>
<dbReference type="GO" id="GO:0060337">
    <property type="term" value="P:type I interferon-mediated signaling pathway"/>
    <property type="evidence" value="ECO:0000318"/>
    <property type="project" value="GO_Central"/>
</dbReference>
<dbReference type="CDD" id="cd00095">
    <property type="entry name" value="IFab"/>
    <property type="match status" value="1"/>
</dbReference>
<dbReference type="FunFam" id="1.20.1250.10:FF:000001">
    <property type="entry name" value="Interferon alpha"/>
    <property type="match status" value="1"/>
</dbReference>
<dbReference type="Gene3D" id="1.20.1250.10">
    <property type="match status" value="1"/>
</dbReference>
<dbReference type="InterPro" id="IPR009079">
    <property type="entry name" value="4_helix_cytokine-like_core"/>
</dbReference>
<dbReference type="InterPro" id="IPR000471">
    <property type="entry name" value="Interferon_alpha/beta/delta"/>
</dbReference>
<dbReference type="PANTHER" id="PTHR11691:SF37">
    <property type="entry name" value="INTERFERON OMEGA-1"/>
    <property type="match status" value="1"/>
</dbReference>
<dbReference type="PANTHER" id="PTHR11691">
    <property type="entry name" value="TYPE I INTERFERON"/>
    <property type="match status" value="1"/>
</dbReference>
<dbReference type="Pfam" id="PF00143">
    <property type="entry name" value="Interferon"/>
    <property type="match status" value="1"/>
</dbReference>
<dbReference type="PRINTS" id="PR00266">
    <property type="entry name" value="INTERFERONAB"/>
</dbReference>
<dbReference type="SMART" id="SM00076">
    <property type="entry name" value="IFabd"/>
    <property type="match status" value="1"/>
</dbReference>
<dbReference type="SUPFAM" id="SSF47266">
    <property type="entry name" value="4-helical cytokines"/>
    <property type="match status" value="1"/>
</dbReference>
<dbReference type="PROSITE" id="PS00252">
    <property type="entry name" value="INTERFERON_A_B_D"/>
    <property type="match status" value="1"/>
</dbReference>